<evidence type="ECO:0000255" key="1">
    <source>
        <dbReference type="HAMAP-Rule" id="MF_00283"/>
    </source>
</evidence>
<keyword id="KW-0030">Aminoacyl-tRNA synthetase</keyword>
<keyword id="KW-0067">ATP-binding</keyword>
<keyword id="KW-0963">Cytoplasm</keyword>
<keyword id="KW-0436">Ligase</keyword>
<keyword id="KW-0460">Magnesium</keyword>
<keyword id="KW-0479">Metal-binding</keyword>
<keyword id="KW-0547">Nucleotide-binding</keyword>
<keyword id="KW-0648">Protein biosynthesis</keyword>
<keyword id="KW-1185">Reference proteome</keyword>
<keyword id="KW-0694">RNA-binding</keyword>
<keyword id="KW-0820">tRNA-binding</keyword>
<feature type="chain" id="PRO_0000126885" description="Phenylalanine--tRNA ligase beta subunit">
    <location>
        <begin position="1"/>
        <end position="795"/>
    </location>
</feature>
<feature type="domain" description="tRNA-binding" evidence="1">
    <location>
        <begin position="39"/>
        <end position="148"/>
    </location>
</feature>
<feature type="domain" description="B5" evidence="1">
    <location>
        <begin position="401"/>
        <end position="476"/>
    </location>
</feature>
<feature type="domain" description="FDX-ACB" evidence="1">
    <location>
        <begin position="701"/>
        <end position="794"/>
    </location>
</feature>
<feature type="binding site" evidence="1">
    <location>
        <position position="454"/>
    </location>
    <ligand>
        <name>Mg(2+)</name>
        <dbReference type="ChEBI" id="CHEBI:18420"/>
        <note>shared with alpha subunit</note>
    </ligand>
</feature>
<feature type="binding site" evidence="1">
    <location>
        <position position="460"/>
    </location>
    <ligand>
        <name>Mg(2+)</name>
        <dbReference type="ChEBI" id="CHEBI:18420"/>
        <note>shared with alpha subunit</note>
    </ligand>
</feature>
<feature type="binding site" evidence="1">
    <location>
        <position position="463"/>
    </location>
    <ligand>
        <name>Mg(2+)</name>
        <dbReference type="ChEBI" id="CHEBI:18420"/>
        <note>shared with alpha subunit</note>
    </ligand>
</feature>
<feature type="binding site" evidence="1">
    <location>
        <position position="464"/>
    </location>
    <ligand>
        <name>Mg(2+)</name>
        <dbReference type="ChEBI" id="CHEBI:18420"/>
        <note>shared with alpha subunit</note>
    </ligand>
</feature>
<comment type="catalytic activity">
    <reaction evidence="1">
        <text>tRNA(Phe) + L-phenylalanine + ATP = L-phenylalanyl-tRNA(Phe) + AMP + diphosphate + H(+)</text>
        <dbReference type="Rhea" id="RHEA:19413"/>
        <dbReference type="Rhea" id="RHEA-COMP:9668"/>
        <dbReference type="Rhea" id="RHEA-COMP:9699"/>
        <dbReference type="ChEBI" id="CHEBI:15378"/>
        <dbReference type="ChEBI" id="CHEBI:30616"/>
        <dbReference type="ChEBI" id="CHEBI:33019"/>
        <dbReference type="ChEBI" id="CHEBI:58095"/>
        <dbReference type="ChEBI" id="CHEBI:78442"/>
        <dbReference type="ChEBI" id="CHEBI:78531"/>
        <dbReference type="ChEBI" id="CHEBI:456215"/>
        <dbReference type="EC" id="6.1.1.20"/>
    </reaction>
</comment>
<comment type="cofactor">
    <cofactor evidence="1">
        <name>Mg(2+)</name>
        <dbReference type="ChEBI" id="CHEBI:18420"/>
    </cofactor>
    <text evidence="1">Binds 2 magnesium ions per tetramer.</text>
</comment>
<comment type="subunit">
    <text evidence="1">Tetramer of two alpha and two beta subunits.</text>
</comment>
<comment type="subcellular location">
    <subcellularLocation>
        <location evidence="1">Cytoplasm</location>
    </subcellularLocation>
</comment>
<comment type="similarity">
    <text evidence="1">Belongs to the phenylalanyl-tRNA synthetase beta subunit family. Type 1 subfamily.</text>
</comment>
<protein>
    <recommendedName>
        <fullName evidence="1">Phenylalanine--tRNA ligase beta subunit</fullName>
        <ecNumber evidence="1">6.1.1.20</ecNumber>
    </recommendedName>
    <alternativeName>
        <fullName evidence="1">Phenylalanyl-tRNA synthetase beta subunit</fullName>
        <shortName evidence="1">PheRS</shortName>
    </alternativeName>
</protein>
<dbReference type="EC" id="6.1.1.20" evidence="1"/>
<dbReference type="EMBL" id="BX950851">
    <property type="protein sequence ID" value="CAG75320.1"/>
    <property type="molecule type" value="Genomic_DNA"/>
</dbReference>
<dbReference type="RefSeq" id="WP_011093971.1">
    <property type="nucleotide sequence ID" value="NC_004547.2"/>
</dbReference>
<dbReference type="SMR" id="Q6D4H3"/>
<dbReference type="STRING" id="218491.ECA2417"/>
<dbReference type="KEGG" id="eca:ECA2417"/>
<dbReference type="PATRIC" id="fig|218491.5.peg.2448"/>
<dbReference type="eggNOG" id="COG0072">
    <property type="taxonomic scope" value="Bacteria"/>
</dbReference>
<dbReference type="eggNOG" id="COG0073">
    <property type="taxonomic scope" value="Bacteria"/>
</dbReference>
<dbReference type="HOGENOM" id="CLU_016891_0_0_6"/>
<dbReference type="OrthoDB" id="9805455at2"/>
<dbReference type="Proteomes" id="UP000007966">
    <property type="component" value="Chromosome"/>
</dbReference>
<dbReference type="GO" id="GO:0009328">
    <property type="term" value="C:phenylalanine-tRNA ligase complex"/>
    <property type="evidence" value="ECO:0007669"/>
    <property type="project" value="TreeGrafter"/>
</dbReference>
<dbReference type="GO" id="GO:0005524">
    <property type="term" value="F:ATP binding"/>
    <property type="evidence" value="ECO:0007669"/>
    <property type="project" value="UniProtKB-UniRule"/>
</dbReference>
<dbReference type="GO" id="GO:0000287">
    <property type="term" value="F:magnesium ion binding"/>
    <property type="evidence" value="ECO:0007669"/>
    <property type="project" value="UniProtKB-UniRule"/>
</dbReference>
<dbReference type="GO" id="GO:0004826">
    <property type="term" value="F:phenylalanine-tRNA ligase activity"/>
    <property type="evidence" value="ECO:0007669"/>
    <property type="project" value="UniProtKB-UniRule"/>
</dbReference>
<dbReference type="GO" id="GO:0000049">
    <property type="term" value="F:tRNA binding"/>
    <property type="evidence" value="ECO:0007669"/>
    <property type="project" value="UniProtKB-KW"/>
</dbReference>
<dbReference type="GO" id="GO:0006432">
    <property type="term" value="P:phenylalanyl-tRNA aminoacylation"/>
    <property type="evidence" value="ECO:0007669"/>
    <property type="project" value="UniProtKB-UniRule"/>
</dbReference>
<dbReference type="CDD" id="cd00769">
    <property type="entry name" value="PheRS_beta_core"/>
    <property type="match status" value="1"/>
</dbReference>
<dbReference type="CDD" id="cd02796">
    <property type="entry name" value="tRNA_bind_bactPheRS"/>
    <property type="match status" value="1"/>
</dbReference>
<dbReference type="FunFam" id="2.40.50.140:FF:000045">
    <property type="entry name" value="Phenylalanine--tRNA ligase beta subunit"/>
    <property type="match status" value="1"/>
</dbReference>
<dbReference type="FunFam" id="3.30.56.10:FF:000002">
    <property type="entry name" value="Phenylalanine--tRNA ligase beta subunit"/>
    <property type="match status" value="1"/>
</dbReference>
<dbReference type="FunFam" id="3.30.70.380:FF:000001">
    <property type="entry name" value="Phenylalanine--tRNA ligase beta subunit"/>
    <property type="match status" value="1"/>
</dbReference>
<dbReference type="FunFam" id="3.30.930.10:FF:000022">
    <property type="entry name" value="Phenylalanine--tRNA ligase beta subunit"/>
    <property type="match status" value="1"/>
</dbReference>
<dbReference type="FunFam" id="3.50.40.10:FF:000001">
    <property type="entry name" value="Phenylalanine--tRNA ligase beta subunit"/>
    <property type="match status" value="1"/>
</dbReference>
<dbReference type="Gene3D" id="3.30.56.10">
    <property type="match status" value="2"/>
</dbReference>
<dbReference type="Gene3D" id="3.30.930.10">
    <property type="entry name" value="Bira Bifunctional Protein, Domain 2"/>
    <property type="match status" value="1"/>
</dbReference>
<dbReference type="Gene3D" id="3.30.70.380">
    <property type="entry name" value="Ferrodoxin-fold anticodon-binding domain"/>
    <property type="match status" value="1"/>
</dbReference>
<dbReference type="Gene3D" id="2.40.50.140">
    <property type="entry name" value="Nucleic acid-binding proteins"/>
    <property type="match status" value="1"/>
</dbReference>
<dbReference type="Gene3D" id="3.50.40.10">
    <property type="entry name" value="Phenylalanyl-trna Synthetase, Chain B, domain 3"/>
    <property type="match status" value="1"/>
</dbReference>
<dbReference type="HAMAP" id="MF_00283">
    <property type="entry name" value="Phe_tRNA_synth_beta1"/>
    <property type="match status" value="1"/>
</dbReference>
<dbReference type="InterPro" id="IPR045864">
    <property type="entry name" value="aa-tRNA-synth_II/BPL/LPL"/>
</dbReference>
<dbReference type="InterPro" id="IPR005146">
    <property type="entry name" value="B3/B4_tRNA-bd"/>
</dbReference>
<dbReference type="InterPro" id="IPR009061">
    <property type="entry name" value="DNA-bd_dom_put_sf"/>
</dbReference>
<dbReference type="InterPro" id="IPR005121">
    <property type="entry name" value="Fdx_antiC-bd"/>
</dbReference>
<dbReference type="InterPro" id="IPR036690">
    <property type="entry name" value="Fdx_antiC-bd_sf"/>
</dbReference>
<dbReference type="InterPro" id="IPR012340">
    <property type="entry name" value="NA-bd_OB-fold"/>
</dbReference>
<dbReference type="InterPro" id="IPR045060">
    <property type="entry name" value="Phe-tRNA-ligase_IIc_bsu"/>
</dbReference>
<dbReference type="InterPro" id="IPR004532">
    <property type="entry name" value="Phe-tRNA-ligase_IIc_bsu_bact"/>
</dbReference>
<dbReference type="InterPro" id="IPR020825">
    <property type="entry name" value="Phe-tRNA_synthase-like_B3/B4"/>
</dbReference>
<dbReference type="InterPro" id="IPR041616">
    <property type="entry name" value="PheRS_beta_core"/>
</dbReference>
<dbReference type="InterPro" id="IPR002547">
    <property type="entry name" value="tRNA-bd_dom"/>
</dbReference>
<dbReference type="InterPro" id="IPR033714">
    <property type="entry name" value="tRNA_bind_bactPheRS"/>
</dbReference>
<dbReference type="InterPro" id="IPR005147">
    <property type="entry name" value="tRNA_synthase_B5-dom"/>
</dbReference>
<dbReference type="NCBIfam" id="TIGR00472">
    <property type="entry name" value="pheT_bact"/>
    <property type="match status" value="1"/>
</dbReference>
<dbReference type="NCBIfam" id="NF045760">
    <property type="entry name" value="YtpR"/>
    <property type="match status" value="1"/>
</dbReference>
<dbReference type="PANTHER" id="PTHR10947:SF0">
    <property type="entry name" value="PHENYLALANINE--TRNA LIGASE BETA SUBUNIT"/>
    <property type="match status" value="1"/>
</dbReference>
<dbReference type="PANTHER" id="PTHR10947">
    <property type="entry name" value="PHENYLALANYL-TRNA SYNTHETASE BETA CHAIN AND LEUCINE-RICH REPEAT-CONTAINING PROTEIN 47"/>
    <property type="match status" value="1"/>
</dbReference>
<dbReference type="Pfam" id="PF03483">
    <property type="entry name" value="B3_4"/>
    <property type="match status" value="1"/>
</dbReference>
<dbReference type="Pfam" id="PF03484">
    <property type="entry name" value="B5"/>
    <property type="match status" value="1"/>
</dbReference>
<dbReference type="Pfam" id="PF03147">
    <property type="entry name" value="FDX-ACB"/>
    <property type="match status" value="1"/>
</dbReference>
<dbReference type="Pfam" id="PF01588">
    <property type="entry name" value="tRNA_bind"/>
    <property type="match status" value="1"/>
</dbReference>
<dbReference type="Pfam" id="PF17759">
    <property type="entry name" value="tRNA_synthFbeta"/>
    <property type="match status" value="1"/>
</dbReference>
<dbReference type="SMART" id="SM00873">
    <property type="entry name" value="B3_4"/>
    <property type="match status" value="1"/>
</dbReference>
<dbReference type="SMART" id="SM00874">
    <property type="entry name" value="B5"/>
    <property type="match status" value="1"/>
</dbReference>
<dbReference type="SMART" id="SM00896">
    <property type="entry name" value="FDX-ACB"/>
    <property type="match status" value="1"/>
</dbReference>
<dbReference type="SUPFAM" id="SSF54991">
    <property type="entry name" value="Anticodon-binding domain of PheRS"/>
    <property type="match status" value="1"/>
</dbReference>
<dbReference type="SUPFAM" id="SSF55681">
    <property type="entry name" value="Class II aaRS and biotin synthetases"/>
    <property type="match status" value="1"/>
</dbReference>
<dbReference type="SUPFAM" id="SSF50249">
    <property type="entry name" value="Nucleic acid-binding proteins"/>
    <property type="match status" value="1"/>
</dbReference>
<dbReference type="SUPFAM" id="SSF56037">
    <property type="entry name" value="PheT/TilS domain"/>
    <property type="match status" value="1"/>
</dbReference>
<dbReference type="SUPFAM" id="SSF46955">
    <property type="entry name" value="Putative DNA-binding domain"/>
    <property type="match status" value="1"/>
</dbReference>
<dbReference type="PROSITE" id="PS51483">
    <property type="entry name" value="B5"/>
    <property type="match status" value="1"/>
</dbReference>
<dbReference type="PROSITE" id="PS51447">
    <property type="entry name" value="FDX_ACB"/>
    <property type="match status" value="1"/>
</dbReference>
<dbReference type="PROSITE" id="PS50886">
    <property type="entry name" value="TRBD"/>
    <property type="match status" value="1"/>
</dbReference>
<organism>
    <name type="scientific">Pectobacterium atrosepticum (strain SCRI 1043 / ATCC BAA-672)</name>
    <name type="common">Erwinia carotovora subsp. atroseptica</name>
    <dbReference type="NCBI Taxonomy" id="218491"/>
    <lineage>
        <taxon>Bacteria</taxon>
        <taxon>Pseudomonadati</taxon>
        <taxon>Pseudomonadota</taxon>
        <taxon>Gammaproteobacteria</taxon>
        <taxon>Enterobacterales</taxon>
        <taxon>Pectobacteriaceae</taxon>
        <taxon>Pectobacterium</taxon>
    </lineage>
</organism>
<gene>
    <name evidence="1" type="primary">pheT</name>
    <name type="ordered locus">ECA2417</name>
</gene>
<reference key="1">
    <citation type="journal article" date="2004" name="Proc. Natl. Acad. Sci. U.S.A.">
        <title>Genome sequence of the enterobacterial phytopathogen Erwinia carotovora subsp. atroseptica and characterization of virulence factors.</title>
        <authorList>
            <person name="Bell K.S."/>
            <person name="Sebaihia M."/>
            <person name="Pritchard L."/>
            <person name="Holden M.T.G."/>
            <person name="Hyman L.J."/>
            <person name="Holeva M.C."/>
            <person name="Thomson N.R."/>
            <person name="Bentley S.D."/>
            <person name="Churcher L.J.C."/>
            <person name="Mungall K."/>
            <person name="Atkin R."/>
            <person name="Bason N."/>
            <person name="Brooks K."/>
            <person name="Chillingworth T."/>
            <person name="Clark K."/>
            <person name="Doggett J."/>
            <person name="Fraser A."/>
            <person name="Hance Z."/>
            <person name="Hauser H."/>
            <person name="Jagels K."/>
            <person name="Moule S."/>
            <person name="Norbertczak H."/>
            <person name="Ormond D."/>
            <person name="Price C."/>
            <person name="Quail M.A."/>
            <person name="Sanders M."/>
            <person name="Walker D."/>
            <person name="Whitehead S."/>
            <person name="Salmond G.P.C."/>
            <person name="Birch P.R.J."/>
            <person name="Parkhill J."/>
            <person name="Toth I.K."/>
        </authorList>
    </citation>
    <scope>NUCLEOTIDE SEQUENCE [LARGE SCALE GENOMIC DNA]</scope>
    <source>
        <strain>SCRI 1043 / ATCC BAA-672</strain>
    </source>
</reference>
<accession>Q6D4H3</accession>
<sequence length="795" mass="86851">MKFSELWLREWVNPAVDSETLSEQITMAGLEVDGVEPVAGAFHGVVVGEVVECGQHPNADKLRVTKVNVGGERLLDIVCGAPNCRQGLKVAVATVGAVLPGDFKIKAAKLRGEPSEGMLCSFSELGISDDHDGIIELPADAPIGTDIRDYLKLDDNAIEISVTPNRADCLGIIGVARDVAVLNQLALNEPTIEPVAATIQDTFPIQVEAPQACPRYLGRVVKGINVKAATPLWMREKLRRCGIRSIDPVVDVTNYVLLELGQPMHAFDLDRLNGSIIVRMAEEGETLTLLDGNEVKLNADTLVIADQQNALAMGGIFGGEHSGVNEETQNVLLECAYFNPLSITGRARRHGLHTDASHRYERGVDPALQHKAIERATRLLIDICGGEAGPVVDITSDADLPTRATITLRREKLDRLIGHVIADEQVSDILQRLGCNVVKTDAGWQATAPSWRFDMEIEEDLVEEVARIYGYNNIPNIPTQAPLIMTSHREASLALKRVKTLLVDHGYQEAITYSFVDPKIQGLIHPNEASLSLPSPISVEMSVMRLSLWSGLLSAAVYNQNRQQSRLRLFESGLRFVPDASADLGIRQDLMLSGVITGTRYEEHWDLARQAVDFYDLKGDLEAVLALTGKLSEVEFKAENNPALHPGQSAAIYLCGERIGFIGVIHPELERKLDLNGRTVVFELLWDKVADRVLPDANEISRFPANRRDIAVVVAENVPAGDILAECKKVGANQLVGVNLFDVYRGKGVAEGYKSLAISLTLQDTTRTLAEEEIAATVAECVAALKQRFQASLRD</sequence>
<proteinExistence type="inferred from homology"/>
<name>SYFB_PECAS</name>